<protein>
    <recommendedName>
        <fullName evidence="1">5-deoxy-glucuronate isomerase</fullName>
        <shortName evidence="1">5DG isomerase</shortName>
        <ecNumber evidence="1">5.3.1.30</ecNumber>
    </recommendedName>
</protein>
<evidence type="ECO:0000255" key="1">
    <source>
        <dbReference type="HAMAP-Rule" id="MF_01673"/>
    </source>
</evidence>
<feature type="chain" id="PRO_1000215887" description="5-deoxy-glucuronate isomerase">
    <location>
        <begin position="1"/>
        <end position="273"/>
    </location>
</feature>
<name>IOLB_LISMC</name>
<gene>
    <name evidence="1" type="primary">iolB</name>
    <name type="ordered locus">Lm4b_00402</name>
</gene>
<comment type="function">
    <text evidence="1">Involved in the isomerization of 5-deoxy-glucuronate (5DG) to 5-dehydro-2-deoxy-D-gluconate (DKG or 2-deoxy-5-keto-D-gluconate).</text>
</comment>
<comment type="catalytic activity">
    <reaction evidence="1">
        <text>5-deoxy-D-glucuronate = 5-dehydro-2-deoxy-D-gluconate</text>
        <dbReference type="Rhea" id="RHEA:25840"/>
        <dbReference type="ChEBI" id="CHEBI:16669"/>
        <dbReference type="ChEBI" id="CHEBI:58852"/>
        <dbReference type="EC" id="5.3.1.30"/>
    </reaction>
</comment>
<comment type="pathway">
    <text evidence="1">Polyol metabolism; myo-inositol degradation into acetyl-CoA; acetyl-CoA from myo-inositol: step 4/7.</text>
</comment>
<comment type="similarity">
    <text evidence="1">Belongs to the isomerase IolB family.</text>
</comment>
<keyword id="KW-0413">Isomerase</keyword>
<accession>C1KZA0</accession>
<sequence length="273" mass="30884">MGKLLRKPLNERIAPGITFVQDINQANSPLSYVGFRLIEMEKGAIYQEELTDLECCIVALTGKITVSEGDNIFAEIGTRANVFEKIPTDSVFISGGRTFQVKADTEKARVALCYSQANRDLPTTLIKASDNSIEQRGKYQNKRLVHNILPDVSEVASSLLVVEVYTDGGNFSSYPPHKHDRDNLPAESLLEESYYHEINPEQGFIFQRVYTDDRTLDETMAVEHQNAVIVPEGYHPVGVPDGYDSYYLNVMAGPKRVWKFHNDPDHEWILERD</sequence>
<dbReference type="EC" id="5.3.1.30" evidence="1"/>
<dbReference type="EMBL" id="FM242711">
    <property type="protein sequence ID" value="CAS04170.1"/>
    <property type="molecule type" value="Genomic_DNA"/>
</dbReference>
<dbReference type="RefSeq" id="WP_003724309.1">
    <property type="nucleotide sequence ID" value="NC_012488.1"/>
</dbReference>
<dbReference type="SMR" id="C1KZA0"/>
<dbReference type="KEGG" id="lmc:Lm4b_00402"/>
<dbReference type="HOGENOM" id="CLU_066438_1_0_9"/>
<dbReference type="UniPathway" id="UPA00076">
    <property type="reaction ID" value="UER00920"/>
</dbReference>
<dbReference type="GO" id="GO:0102482">
    <property type="term" value="F:5-deoxy-D-glucuronate isomerase activity"/>
    <property type="evidence" value="ECO:0007669"/>
    <property type="project" value="UniProtKB-EC"/>
</dbReference>
<dbReference type="GO" id="GO:0008880">
    <property type="term" value="F:glucuronate isomerase activity"/>
    <property type="evidence" value="ECO:0007669"/>
    <property type="project" value="InterPro"/>
</dbReference>
<dbReference type="GO" id="GO:0019310">
    <property type="term" value="P:inositol catabolic process"/>
    <property type="evidence" value="ECO:0007669"/>
    <property type="project" value="UniProtKB-UniRule"/>
</dbReference>
<dbReference type="FunFam" id="2.60.120.10:FF:000202">
    <property type="entry name" value="5-deoxy-glucuronate isomerase"/>
    <property type="match status" value="1"/>
</dbReference>
<dbReference type="FunFam" id="2.60.120.10:FF:000231">
    <property type="entry name" value="5-deoxy-glucuronate isomerase"/>
    <property type="match status" value="1"/>
</dbReference>
<dbReference type="Gene3D" id="2.60.120.10">
    <property type="entry name" value="Jelly Rolls"/>
    <property type="match status" value="2"/>
</dbReference>
<dbReference type="HAMAP" id="MF_01673">
    <property type="entry name" value="IolB"/>
    <property type="match status" value="1"/>
</dbReference>
<dbReference type="InterPro" id="IPR024203">
    <property type="entry name" value="Deoxy-glucuronate_isom_IolB"/>
</dbReference>
<dbReference type="InterPro" id="IPR023770">
    <property type="entry name" value="IolB_Bacilli"/>
</dbReference>
<dbReference type="InterPro" id="IPR021120">
    <property type="entry name" value="KduI/IolB_isomerase"/>
</dbReference>
<dbReference type="InterPro" id="IPR014710">
    <property type="entry name" value="RmlC-like_jellyroll"/>
</dbReference>
<dbReference type="InterPro" id="IPR011051">
    <property type="entry name" value="RmlC_Cupin_sf"/>
</dbReference>
<dbReference type="NCBIfam" id="TIGR04378">
    <property type="entry name" value="myo_inos_iolB"/>
    <property type="match status" value="1"/>
</dbReference>
<dbReference type="PANTHER" id="PTHR39193">
    <property type="entry name" value="5-DEOXY-GLUCURONATE ISOMERASE"/>
    <property type="match status" value="1"/>
</dbReference>
<dbReference type="PANTHER" id="PTHR39193:SF1">
    <property type="entry name" value="5-DEOXY-GLUCURONATE ISOMERASE"/>
    <property type="match status" value="1"/>
</dbReference>
<dbReference type="Pfam" id="PF04962">
    <property type="entry name" value="KduI"/>
    <property type="match status" value="1"/>
</dbReference>
<dbReference type="PIRSF" id="PIRSF036628">
    <property type="entry name" value="IolB"/>
    <property type="match status" value="1"/>
</dbReference>
<dbReference type="SUPFAM" id="SSF51182">
    <property type="entry name" value="RmlC-like cupins"/>
    <property type="match status" value="1"/>
</dbReference>
<organism>
    <name type="scientific">Listeria monocytogenes serotype 4b (strain CLIP80459)</name>
    <dbReference type="NCBI Taxonomy" id="568819"/>
    <lineage>
        <taxon>Bacteria</taxon>
        <taxon>Bacillati</taxon>
        <taxon>Bacillota</taxon>
        <taxon>Bacilli</taxon>
        <taxon>Bacillales</taxon>
        <taxon>Listeriaceae</taxon>
        <taxon>Listeria</taxon>
    </lineage>
</organism>
<reference key="1">
    <citation type="journal article" date="2012" name="BMC Genomics">
        <title>Comparative genomics and transcriptomics of lineages I, II, and III strains of Listeria monocytogenes.</title>
        <authorList>
            <person name="Hain T."/>
            <person name="Ghai R."/>
            <person name="Billion A."/>
            <person name="Kuenne C.T."/>
            <person name="Steinweg C."/>
            <person name="Izar B."/>
            <person name="Mohamed W."/>
            <person name="Mraheil M."/>
            <person name="Domann E."/>
            <person name="Schaffrath S."/>
            <person name="Karst U."/>
            <person name="Goesmann A."/>
            <person name="Oehm S."/>
            <person name="Puhler A."/>
            <person name="Merkl R."/>
            <person name="Vorwerk S."/>
            <person name="Glaser P."/>
            <person name="Garrido P."/>
            <person name="Rusniok C."/>
            <person name="Buchrieser C."/>
            <person name="Goebel W."/>
            <person name="Chakraborty T."/>
        </authorList>
    </citation>
    <scope>NUCLEOTIDE SEQUENCE [LARGE SCALE GENOMIC DNA]</scope>
    <source>
        <strain>CLIP80459</strain>
    </source>
</reference>
<proteinExistence type="inferred from homology"/>